<feature type="chain" id="PRO_0000335205" description="DNA mismatch repair protein MutS">
    <location>
        <begin position="1"/>
        <end position="859"/>
    </location>
</feature>
<feature type="binding site" evidence="1">
    <location>
        <begin position="617"/>
        <end position="624"/>
    </location>
    <ligand>
        <name>ATP</name>
        <dbReference type="ChEBI" id="CHEBI:30616"/>
    </ligand>
</feature>
<reference key="1">
    <citation type="journal article" date="2008" name="Proc. Natl. Acad. Sci. U.S.A.">
        <title>Nitrogen fixation island and rhizosphere competence traits in the genome of root-associated Pseudomonas stutzeri A1501.</title>
        <authorList>
            <person name="Yan Y."/>
            <person name="Yang J."/>
            <person name="Dou Y."/>
            <person name="Chen M."/>
            <person name="Ping S."/>
            <person name="Peng J."/>
            <person name="Lu W."/>
            <person name="Zhang W."/>
            <person name="Yao Z."/>
            <person name="Li H."/>
            <person name="Liu W."/>
            <person name="He S."/>
            <person name="Geng L."/>
            <person name="Zhang X."/>
            <person name="Yang F."/>
            <person name="Yu H."/>
            <person name="Zhan Y."/>
            <person name="Li D."/>
            <person name="Lin Z."/>
            <person name="Wang Y."/>
            <person name="Elmerich C."/>
            <person name="Lin M."/>
            <person name="Jin Q."/>
        </authorList>
    </citation>
    <scope>NUCLEOTIDE SEQUENCE [LARGE SCALE GENOMIC DNA]</scope>
    <source>
        <strain>A1501</strain>
    </source>
</reference>
<evidence type="ECO:0000255" key="1">
    <source>
        <dbReference type="HAMAP-Rule" id="MF_00096"/>
    </source>
</evidence>
<evidence type="ECO:0000305" key="2"/>
<protein>
    <recommendedName>
        <fullName evidence="1">DNA mismatch repair protein MutS</fullName>
    </recommendedName>
</protein>
<organism>
    <name type="scientific">Stutzerimonas stutzeri (strain A1501)</name>
    <name type="common">Pseudomonas stutzeri</name>
    <dbReference type="NCBI Taxonomy" id="379731"/>
    <lineage>
        <taxon>Bacteria</taxon>
        <taxon>Pseudomonadati</taxon>
        <taxon>Pseudomonadota</taxon>
        <taxon>Gammaproteobacteria</taxon>
        <taxon>Pseudomonadales</taxon>
        <taxon>Pseudomonadaceae</taxon>
        <taxon>Stutzerimonas</taxon>
    </lineage>
</organism>
<sequence length="859" mass="95159">MTKSNADLSAHTPMMQQYWKLKREHPDQLMFYRMGDFYELFYDDAKKAAALLDITLTARGQSAGTAIPMAGIPFHSAEGYLARLVKLGESVVICEQIGDPATSKGPVERQVVRIITPGTVSDEALLDERRDNLLAAVVGDEKLFGLSVLDIASGRFSVQELKGWETLLAELERLSPAELLIPDDWPQGLPLEKRRGVRRRAPWDFDRDSAFKSLCQQFSTQDLKGFGCENLTLAIGAAGCLLAYAKETQRTALPHLRSLRHERLDDTVILDGASRRNLELDVNLAGGRENTLQSVMDRCQTAMGSRLLTRWLNRPLRNREILEARQDSITCLLEHYRFEQLQPQLKDIGDLERILARIGLRNARPRDLARLRDALAALPQLQAGMQDLVAPHLLGLAKSIGTYPELADLLARAIIDNPPAVIRDGGVLKTGYDAELDELQSLSENAGQYLMDLETREKARTGLANLKVGYNRVHGYFIELPSKQAESAPADYIRRQTLKGAERFITPELKEFEDKALSAKSRALAREKLLYDELLEMLIGHLAPLQESAAALAELDVLSNLAERALNLDLNRPRFVEQPCLRIEQGRHPVVEQVLETPFVANDLALDDATRMLVITGPNMGGKSTYMRQTALIVLLAQIGSFVPAAACELSLVDRIFTRIGSSDDLAGGRSTFMVEMSETANILHNASDRSLVLMDEVGRGTSTFDGLSLAWAAAEQLARLRAFTLFATHYFELTVLPESEPVVANVHLSATEHNERIVFLHHVLPGPASQSYGLAVAQLAGVPGEVIQRARDHLSRLETTSLPHEAPRMAPGQPAPPMQSDLFASLPHPVLEELGRINPDDVTPRQALELLYSLKSRI</sequence>
<gene>
    <name evidence="1" type="primary">mutS</name>
    <name type="ordered locus">PST_1505</name>
</gene>
<comment type="function">
    <text evidence="1">This protein is involved in the repair of mismatches in DNA. It is possible that it carries out the mismatch recognition step. This protein has a weak ATPase activity.</text>
</comment>
<comment type="similarity">
    <text evidence="1">Belongs to the DNA mismatch repair MutS family.</text>
</comment>
<comment type="sequence caution" evidence="2">
    <conflict type="erroneous initiation">
        <sequence resource="EMBL-CDS" id="ABP79190"/>
    </conflict>
</comment>
<proteinExistence type="inferred from homology"/>
<dbReference type="EMBL" id="CP000304">
    <property type="protein sequence ID" value="ABP79190.1"/>
    <property type="status" value="ALT_INIT"/>
    <property type="molecule type" value="Genomic_DNA"/>
</dbReference>
<dbReference type="RefSeq" id="WP_014596278.1">
    <property type="nucleotide sequence ID" value="NC_009434.1"/>
</dbReference>
<dbReference type="SMR" id="A4VJN9"/>
<dbReference type="KEGG" id="psa:PST_1505"/>
<dbReference type="eggNOG" id="COG0249">
    <property type="taxonomic scope" value="Bacteria"/>
</dbReference>
<dbReference type="HOGENOM" id="CLU_002472_3_1_6"/>
<dbReference type="Proteomes" id="UP000000233">
    <property type="component" value="Chromosome"/>
</dbReference>
<dbReference type="GO" id="GO:0005829">
    <property type="term" value="C:cytosol"/>
    <property type="evidence" value="ECO:0007669"/>
    <property type="project" value="TreeGrafter"/>
</dbReference>
<dbReference type="GO" id="GO:0005524">
    <property type="term" value="F:ATP binding"/>
    <property type="evidence" value="ECO:0007669"/>
    <property type="project" value="UniProtKB-UniRule"/>
</dbReference>
<dbReference type="GO" id="GO:0140664">
    <property type="term" value="F:ATP-dependent DNA damage sensor activity"/>
    <property type="evidence" value="ECO:0007669"/>
    <property type="project" value="InterPro"/>
</dbReference>
<dbReference type="GO" id="GO:0003684">
    <property type="term" value="F:damaged DNA binding"/>
    <property type="evidence" value="ECO:0007669"/>
    <property type="project" value="UniProtKB-UniRule"/>
</dbReference>
<dbReference type="GO" id="GO:0030983">
    <property type="term" value="F:mismatched DNA binding"/>
    <property type="evidence" value="ECO:0007669"/>
    <property type="project" value="InterPro"/>
</dbReference>
<dbReference type="GO" id="GO:0006298">
    <property type="term" value="P:mismatch repair"/>
    <property type="evidence" value="ECO:0007669"/>
    <property type="project" value="UniProtKB-UniRule"/>
</dbReference>
<dbReference type="CDD" id="cd03284">
    <property type="entry name" value="ABC_MutS1"/>
    <property type="match status" value="1"/>
</dbReference>
<dbReference type="FunFam" id="1.10.1420.10:FF:000002">
    <property type="entry name" value="DNA mismatch repair protein MutS"/>
    <property type="match status" value="1"/>
</dbReference>
<dbReference type="FunFam" id="3.30.420.110:FF:000001">
    <property type="entry name" value="DNA mismatch repair protein MutS"/>
    <property type="match status" value="1"/>
</dbReference>
<dbReference type="FunFam" id="3.40.1170.10:FF:000001">
    <property type="entry name" value="DNA mismatch repair protein MutS"/>
    <property type="match status" value="1"/>
</dbReference>
<dbReference type="FunFam" id="3.40.50.300:FF:000283">
    <property type="entry name" value="DNA mismatch repair protein MutS"/>
    <property type="match status" value="1"/>
</dbReference>
<dbReference type="Gene3D" id="1.10.1420.10">
    <property type="match status" value="2"/>
</dbReference>
<dbReference type="Gene3D" id="6.10.140.430">
    <property type="match status" value="1"/>
</dbReference>
<dbReference type="Gene3D" id="3.40.1170.10">
    <property type="entry name" value="DNA repair protein MutS, domain I"/>
    <property type="match status" value="1"/>
</dbReference>
<dbReference type="Gene3D" id="3.30.420.110">
    <property type="entry name" value="MutS, connector domain"/>
    <property type="match status" value="1"/>
</dbReference>
<dbReference type="Gene3D" id="3.40.50.300">
    <property type="entry name" value="P-loop containing nucleotide triphosphate hydrolases"/>
    <property type="match status" value="1"/>
</dbReference>
<dbReference type="HAMAP" id="MF_00096">
    <property type="entry name" value="MutS"/>
    <property type="match status" value="1"/>
</dbReference>
<dbReference type="InterPro" id="IPR005748">
    <property type="entry name" value="DNA_mismatch_repair_MutS"/>
</dbReference>
<dbReference type="InterPro" id="IPR007695">
    <property type="entry name" value="DNA_mismatch_repair_MutS-lik_N"/>
</dbReference>
<dbReference type="InterPro" id="IPR017261">
    <property type="entry name" value="DNA_mismatch_repair_MutS/MSH"/>
</dbReference>
<dbReference type="InterPro" id="IPR000432">
    <property type="entry name" value="DNA_mismatch_repair_MutS_C"/>
</dbReference>
<dbReference type="InterPro" id="IPR007861">
    <property type="entry name" value="DNA_mismatch_repair_MutS_clamp"/>
</dbReference>
<dbReference type="InterPro" id="IPR007696">
    <property type="entry name" value="DNA_mismatch_repair_MutS_core"/>
</dbReference>
<dbReference type="InterPro" id="IPR016151">
    <property type="entry name" value="DNA_mismatch_repair_MutS_N"/>
</dbReference>
<dbReference type="InterPro" id="IPR036187">
    <property type="entry name" value="DNA_mismatch_repair_MutS_sf"/>
</dbReference>
<dbReference type="InterPro" id="IPR007860">
    <property type="entry name" value="DNA_mmatch_repair_MutS_con_dom"/>
</dbReference>
<dbReference type="InterPro" id="IPR045076">
    <property type="entry name" value="MutS"/>
</dbReference>
<dbReference type="InterPro" id="IPR036678">
    <property type="entry name" value="MutS_con_dom_sf"/>
</dbReference>
<dbReference type="InterPro" id="IPR027417">
    <property type="entry name" value="P-loop_NTPase"/>
</dbReference>
<dbReference type="NCBIfam" id="TIGR01070">
    <property type="entry name" value="mutS1"/>
    <property type="match status" value="1"/>
</dbReference>
<dbReference type="NCBIfam" id="NF003810">
    <property type="entry name" value="PRK05399.1"/>
    <property type="match status" value="1"/>
</dbReference>
<dbReference type="PANTHER" id="PTHR11361:SF34">
    <property type="entry name" value="DNA MISMATCH REPAIR PROTEIN MSH1, MITOCHONDRIAL"/>
    <property type="match status" value="1"/>
</dbReference>
<dbReference type="PANTHER" id="PTHR11361">
    <property type="entry name" value="DNA MISMATCH REPAIR PROTEIN MUTS FAMILY MEMBER"/>
    <property type="match status" value="1"/>
</dbReference>
<dbReference type="Pfam" id="PF01624">
    <property type="entry name" value="MutS_I"/>
    <property type="match status" value="1"/>
</dbReference>
<dbReference type="Pfam" id="PF05188">
    <property type="entry name" value="MutS_II"/>
    <property type="match status" value="1"/>
</dbReference>
<dbReference type="Pfam" id="PF05192">
    <property type="entry name" value="MutS_III"/>
    <property type="match status" value="1"/>
</dbReference>
<dbReference type="Pfam" id="PF05190">
    <property type="entry name" value="MutS_IV"/>
    <property type="match status" value="1"/>
</dbReference>
<dbReference type="Pfam" id="PF00488">
    <property type="entry name" value="MutS_V"/>
    <property type="match status" value="1"/>
</dbReference>
<dbReference type="PIRSF" id="PIRSF037677">
    <property type="entry name" value="DNA_mis_repair_Msh6"/>
    <property type="match status" value="1"/>
</dbReference>
<dbReference type="SMART" id="SM00534">
    <property type="entry name" value="MUTSac"/>
    <property type="match status" value="1"/>
</dbReference>
<dbReference type="SMART" id="SM00533">
    <property type="entry name" value="MUTSd"/>
    <property type="match status" value="1"/>
</dbReference>
<dbReference type="SUPFAM" id="SSF55271">
    <property type="entry name" value="DNA repair protein MutS, domain I"/>
    <property type="match status" value="1"/>
</dbReference>
<dbReference type="SUPFAM" id="SSF53150">
    <property type="entry name" value="DNA repair protein MutS, domain II"/>
    <property type="match status" value="1"/>
</dbReference>
<dbReference type="SUPFAM" id="SSF48334">
    <property type="entry name" value="DNA repair protein MutS, domain III"/>
    <property type="match status" value="1"/>
</dbReference>
<dbReference type="SUPFAM" id="SSF52540">
    <property type="entry name" value="P-loop containing nucleoside triphosphate hydrolases"/>
    <property type="match status" value="1"/>
</dbReference>
<dbReference type="PROSITE" id="PS00486">
    <property type="entry name" value="DNA_MISMATCH_REPAIR_2"/>
    <property type="match status" value="1"/>
</dbReference>
<keyword id="KW-0067">ATP-binding</keyword>
<keyword id="KW-0227">DNA damage</keyword>
<keyword id="KW-0234">DNA repair</keyword>
<keyword id="KW-0238">DNA-binding</keyword>
<keyword id="KW-0547">Nucleotide-binding</keyword>
<keyword id="KW-1185">Reference proteome</keyword>
<name>MUTS_STUS1</name>
<accession>A4VJN9</accession>